<evidence type="ECO:0000250" key="1"/>
<evidence type="ECO:0000255" key="2">
    <source>
        <dbReference type="PROSITE-ProRule" id="PRU00213"/>
    </source>
</evidence>
<evidence type="ECO:0000256" key="3">
    <source>
        <dbReference type="SAM" id="MobiDB-lite"/>
    </source>
</evidence>
<evidence type="ECO:0000305" key="4"/>
<comment type="function">
    <text evidence="1">Binds and presumably selects ubiquitin-conjugates for destruction.</text>
</comment>
<comment type="subunit">
    <text evidence="1">The 26S proteasome is composed of a core protease, known as the 20S proteasome, capped at one or both ends by the 19S regulatory complex (RC). The RC is composed of at least 18 different subunits in two subcomplexes, the base and the lid, which form the portions proximal and distal to the 20S proteolytic core, respectively (By similarity).</text>
</comment>
<comment type="similarity">
    <text evidence="4">Belongs to the proteasome subunit S5A family.</text>
</comment>
<comment type="sequence caution" evidence="4">
    <conflict type="erroneous initiation">
        <sequence resource="EMBL-CDS" id="AAB86561"/>
    </conflict>
</comment>
<keyword id="KW-0647">Proteasome</keyword>
<keyword id="KW-1185">Reference proteome</keyword>
<keyword id="KW-0677">Repeat</keyword>
<dbReference type="EMBL" id="AF030960">
    <property type="protein sequence ID" value="AAB86561.1"/>
    <property type="status" value="ALT_INIT"/>
    <property type="molecule type" value="mRNA"/>
</dbReference>
<dbReference type="RefSeq" id="XP_018649562.1">
    <property type="nucleotide sequence ID" value="XM_018795228.1"/>
</dbReference>
<dbReference type="SMR" id="O17453"/>
<dbReference type="FunCoup" id="O17453">
    <property type="interactions" value="2180"/>
</dbReference>
<dbReference type="STRING" id="6183.O17453"/>
<dbReference type="EnsemblMetazoa" id="Smp_000740.1">
    <property type="protein sequence ID" value="Smp_000740.1"/>
    <property type="gene ID" value="Smp_000740"/>
</dbReference>
<dbReference type="GeneID" id="8343560"/>
<dbReference type="KEGG" id="smm:Smp_000740.1"/>
<dbReference type="WBParaSite" id="Smp_000740.1">
    <property type="protein sequence ID" value="Smp_000740.1"/>
    <property type="gene ID" value="Smp_000740"/>
</dbReference>
<dbReference type="CTD" id="8343560"/>
<dbReference type="eggNOG" id="KOG2884">
    <property type="taxonomic scope" value="Eukaryota"/>
</dbReference>
<dbReference type="HOGENOM" id="CLU_033293_0_0_1"/>
<dbReference type="InParanoid" id="O17453"/>
<dbReference type="OMA" id="QMSMQDQ"/>
<dbReference type="OrthoDB" id="1731724at2759"/>
<dbReference type="PhylomeDB" id="O17453"/>
<dbReference type="Proteomes" id="UP000008854">
    <property type="component" value="Unassembled WGS sequence"/>
</dbReference>
<dbReference type="ExpressionAtlas" id="O17453">
    <property type="expression patterns" value="baseline"/>
</dbReference>
<dbReference type="GO" id="GO:0005829">
    <property type="term" value="C:cytosol"/>
    <property type="evidence" value="ECO:0007669"/>
    <property type="project" value="TreeGrafter"/>
</dbReference>
<dbReference type="GO" id="GO:0005634">
    <property type="term" value="C:nucleus"/>
    <property type="evidence" value="ECO:0007669"/>
    <property type="project" value="TreeGrafter"/>
</dbReference>
<dbReference type="GO" id="GO:0008540">
    <property type="term" value="C:proteasome regulatory particle, base subcomplex"/>
    <property type="evidence" value="ECO:0007669"/>
    <property type="project" value="TreeGrafter"/>
</dbReference>
<dbReference type="GO" id="GO:0031593">
    <property type="term" value="F:polyubiquitin modification-dependent protein binding"/>
    <property type="evidence" value="ECO:0007669"/>
    <property type="project" value="TreeGrafter"/>
</dbReference>
<dbReference type="GO" id="GO:0043161">
    <property type="term" value="P:proteasome-mediated ubiquitin-dependent protein catabolic process"/>
    <property type="evidence" value="ECO:0007669"/>
    <property type="project" value="TreeGrafter"/>
</dbReference>
<dbReference type="CDD" id="cd22297">
    <property type="entry name" value="PSMD4_RAZUL"/>
    <property type="match status" value="1"/>
</dbReference>
<dbReference type="CDD" id="cd01452">
    <property type="entry name" value="VWA_26S_proteasome_subunit"/>
    <property type="match status" value="1"/>
</dbReference>
<dbReference type="FunFam" id="3.40.50.410:FF:000005">
    <property type="entry name" value="26S proteasome non-ATPase regulatory subunit 4"/>
    <property type="match status" value="1"/>
</dbReference>
<dbReference type="Gene3D" id="6.10.250.380">
    <property type="match status" value="1"/>
</dbReference>
<dbReference type="Gene3D" id="6.10.300.40">
    <property type="match status" value="1"/>
</dbReference>
<dbReference type="Gene3D" id="3.40.50.410">
    <property type="entry name" value="von Willebrand factor, type A domain"/>
    <property type="match status" value="1"/>
</dbReference>
<dbReference type="InterPro" id="IPR027040">
    <property type="entry name" value="PSMD4"/>
</dbReference>
<dbReference type="InterPro" id="IPR049590">
    <property type="entry name" value="PSMD4_RAZUL-like"/>
</dbReference>
<dbReference type="InterPro" id="IPR003903">
    <property type="entry name" value="UIM_dom"/>
</dbReference>
<dbReference type="InterPro" id="IPR002035">
    <property type="entry name" value="VWF_A"/>
</dbReference>
<dbReference type="InterPro" id="IPR036465">
    <property type="entry name" value="vWFA_dom_sf"/>
</dbReference>
<dbReference type="PANTHER" id="PTHR10223">
    <property type="entry name" value="26S PROTEASOME NON-ATPASE REGULATORY SUBUNIT 4"/>
    <property type="match status" value="1"/>
</dbReference>
<dbReference type="PANTHER" id="PTHR10223:SF0">
    <property type="entry name" value="26S PROTEASOME NON-ATPASE REGULATORY SUBUNIT 4"/>
    <property type="match status" value="1"/>
</dbReference>
<dbReference type="Pfam" id="PF02809">
    <property type="entry name" value="UIM"/>
    <property type="match status" value="3"/>
</dbReference>
<dbReference type="Pfam" id="PF13519">
    <property type="entry name" value="VWA_2"/>
    <property type="match status" value="1"/>
</dbReference>
<dbReference type="SMART" id="SM00726">
    <property type="entry name" value="UIM"/>
    <property type="match status" value="3"/>
</dbReference>
<dbReference type="SUPFAM" id="SSF53300">
    <property type="entry name" value="vWA-like"/>
    <property type="match status" value="1"/>
</dbReference>
<dbReference type="PROSITE" id="PS50330">
    <property type="entry name" value="UIM"/>
    <property type="match status" value="3"/>
</dbReference>
<sequence length="420" mass="45728">MSQEATIIAVDNSDYMRNGDFFPTRLQAQNDAVGLICQSKRQRNPENTIGLLSLANTEVLCTLTNDVSKIYNRLHLVEPKGRIIFCSSIRIAHLALRHRQLRHQKMRIVCFIGSPILEDEKELTRLAKRLKKEKVNVDIINFGENETNEQKLSEFIDTLNGKDGTGSHLISVAPGTVLHDTLMTSPVVAGEDGSGMAGAGLGLEFGLDGAEDPDLLYALRVSMEDQRMRQEHEVNGDGSNTSVVATSLPAGSGTSEEAMLQQALAMSMQMNNTESSSLPMDIDLAAMSEEDQIAYALRMSLQQMGEETTQPTTTTLESDKTIVEPSGVAMDIDQTPTKVTENPNLSSSSGTLAAATSAVPTSADLDVMYDAEFLESVLQSLPGVDTQNEDVRKAINALTKSQSQRGSKKDEKEDEDKQNS</sequence>
<feature type="chain" id="PRO_0000173831" description="26S proteasome non-ATPase regulatory subunit 4">
    <location>
        <begin position="1"/>
        <end position="420"/>
    </location>
</feature>
<feature type="domain" description="VWFA">
    <location>
        <begin position="1"/>
        <end position="174"/>
    </location>
</feature>
<feature type="domain" description="UIM 1" evidence="2">
    <location>
        <begin position="210"/>
        <end position="229"/>
    </location>
</feature>
<feature type="domain" description="UIM 2" evidence="2">
    <location>
        <begin position="255"/>
        <end position="274"/>
    </location>
</feature>
<feature type="domain" description="UIM 3" evidence="2">
    <location>
        <begin position="288"/>
        <end position="307"/>
    </location>
</feature>
<feature type="region of interest" description="Disordered" evidence="3">
    <location>
        <begin position="392"/>
        <end position="420"/>
    </location>
</feature>
<feature type="compositionally biased region" description="Basic and acidic residues" evidence="3">
    <location>
        <begin position="407"/>
        <end position="420"/>
    </location>
</feature>
<organism>
    <name type="scientific">Schistosoma mansoni</name>
    <name type="common">Blood fluke</name>
    <dbReference type="NCBI Taxonomy" id="6183"/>
    <lineage>
        <taxon>Eukaryota</taxon>
        <taxon>Metazoa</taxon>
        <taxon>Spiralia</taxon>
        <taxon>Lophotrochozoa</taxon>
        <taxon>Platyhelminthes</taxon>
        <taxon>Trematoda</taxon>
        <taxon>Digenea</taxon>
        <taxon>Strigeidida</taxon>
        <taxon>Schistosomatoidea</taxon>
        <taxon>Schistosomatidae</taxon>
        <taxon>Schistosoma</taxon>
    </lineage>
</organism>
<protein>
    <recommendedName>
        <fullName>26S proteasome non-ATPase regulatory subunit 4</fullName>
    </recommendedName>
    <alternativeName>
        <fullName>26S proteasome regulatory subunit RPN10</fullName>
    </alternativeName>
    <alternativeName>
        <fullName>26S proteasome regulatory subunit S5A</fullName>
    </alternativeName>
</protein>
<name>PSMD4_SCHMA</name>
<accession>O17453</accession>
<proteinExistence type="evidence at transcript level"/>
<reference key="1">
    <citation type="submission" date="1997-10" db="EMBL/GenBank/DDBJ databases">
        <authorList>
            <person name="Harrop R."/>
            <person name="Wilson R.A."/>
        </authorList>
    </citation>
    <scope>NUCLEOTIDE SEQUENCE [MRNA]</scope>
    <source>
        <strain>Puerto Rican</strain>
    </source>
</reference>